<sequence>MTDGNLSTSTNGVALMGILDSRPGNHIQNLQHLTLKAPRSLSLPEYGPKLKLSALEDRHSLQSVDSGIPTLEIGNPEPVPCSVVHVRRKPSESEIVPERACQSACLLPSYAPPAPAGAEREQSVRKSSTFPRTGYDSVKLYSPASQTLQRSDNVSVCSVSSLSTELSTTLSVSNEDILDLVVTSSSSAIVTLENDDDPQFTDVTLSSTRETRDLQRDCAGETEEGRKLRLLGPFSHFFTRNSLARKQNARLDKQSDLGWKLFGKVPLGENAQKDAKKLQKEYEDKAGRPSKPPSPKQNVRKNLDFEPLSTTALILEDRPANLPAKPAEEAQKHRQQYEEMVVQAKKRELKEAQRRKKQLEERCRLEESIGNAVLTWNNEILPNWETMWCSRKVRDLWWQGIPPSVRGKVWSLAIGNELNITHELFDICLARAKERWRSFSTGGSEAETEDAGFSAADREASLELIKLDISRTFPSLCIFQQGGPYHDMLHSVLGAYTCYRPDVGYVQGMSFIAAVLILNLDTADAFIAFSNLLNKPCQMAFFRVDHGLMLTYFAAFEVFFEENLPKLFAHFKKNNLTPDIYLIDWIFTLYSKSLPLDLACRVWDVFCRDGEEFLFRTALGLLRLFQDVLTRMDFIHVAQFLTRLPEDLPAEEFFASIASIQMQSRNKKWAQVLTALQKDSREMEKGSPSLRH</sequence>
<reference key="1">
    <citation type="submission" date="2007-06" db="EMBL/GenBank/DDBJ databases">
        <authorList>
            <consortium name="NIH - Mammalian Gene Collection (MGC) project"/>
        </authorList>
    </citation>
    <scope>NUCLEOTIDE SEQUENCE [LARGE SCALE MRNA]</scope>
    <source>
        <strain>Hereford</strain>
        <tissue>Fetal skin</tissue>
    </source>
</reference>
<accession>A6H7I8</accession>
<name>TBC14_BOVIN</name>
<dbReference type="EMBL" id="BC146262">
    <property type="protein sequence ID" value="AAI46263.1"/>
    <property type="status" value="ALT_INIT"/>
    <property type="molecule type" value="mRNA"/>
</dbReference>
<dbReference type="RefSeq" id="NP_001092646.1">
    <property type="nucleotide sequence ID" value="NM_001099176.1"/>
</dbReference>
<dbReference type="RefSeq" id="XP_005208403.1">
    <property type="nucleotide sequence ID" value="XM_005208346.5"/>
</dbReference>
<dbReference type="RefSeq" id="XP_024849207.1">
    <property type="nucleotide sequence ID" value="XM_024993439.2"/>
</dbReference>
<dbReference type="SMR" id="A6H7I8"/>
<dbReference type="FunCoup" id="A6H7I8">
    <property type="interactions" value="1345"/>
</dbReference>
<dbReference type="STRING" id="9913.ENSBTAP00000067079"/>
<dbReference type="PaxDb" id="9913-ENSBTAP00000039183"/>
<dbReference type="GeneID" id="618286"/>
<dbReference type="KEGG" id="bta:618286"/>
<dbReference type="CTD" id="57533"/>
<dbReference type="VEuPathDB" id="HostDB:ENSBTAG00000005493"/>
<dbReference type="eggNOG" id="KOG2223">
    <property type="taxonomic scope" value="Eukaryota"/>
</dbReference>
<dbReference type="HOGENOM" id="CLU_015133_1_1_1"/>
<dbReference type="InParanoid" id="A6H7I8"/>
<dbReference type="OMA" id="NTEREHR"/>
<dbReference type="OrthoDB" id="294251at2759"/>
<dbReference type="TreeFam" id="TF313318"/>
<dbReference type="Reactome" id="R-BTA-8854214">
    <property type="pathway name" value="TBC/RABGAPs"/>
</dbReference>
<dbReference type="Proteomes" id="UP000009136">
    <property type="component" value="Chromosome 6"/>
</dbReference>
<dbReference type="Bgee" id="ENSBTAG00000005493">
    <property type="expression patterns" value="Expressed in neutrophil and 104 other cell types or tissues"/>
</dbReference>
<dbReference type="GO" id="GO:0005776">
    <property type="term" value="C:autophagosome"/>
    <property type="evidence" value="ECO:0000318"/>
    <property type="project" value="GO_Central"/>
</dbReference>
<dbReference type="GO" id="GO:0005794">
    <property type="term" value="C:Golgi apparatus"/>
    <property type="evidence" value="ECO:0007669"/>
    <property type="project" value="UniProtKB-SubCell"/>
</dbReference>
<dbReference type="GO" id="GO:0055037">
    <property type="term" value="C:recycling endosome"/>
    <property type="evidence" value="ECO:0000318"/>
    <property type="project" value="GO_Central"/>
</dbReference>
<dbReference type="GO" id="GO:0005096">
    <property type="term" value="F:GTPase activator activity"/>
    <property type="evidence" value="ECO:0000318"/>
    <property type="project" value="GO_Central"/>
</dbReference>
<dbReference type="GO" id="GO:2000785">
    <property type="term" value="P:regulation of autophagosome assembly"/>
    <property type="evidence" value="ECO:0000318"/>
    <property type="project" value="GO_Central"/>
</dbReference>
<dbReference type="FunFam" id="1.10.8.270:FF:000008">
    <property type="entry name" value="Putative TBC1 domain family member 14"/>
    <property type="match status" value="1"/>
</dbReference>
<dbReference type="FunFam" id="1.10.10.750:FF:000005">
    <property type="entry name" value="TBC1 domain family member 14"/>
    <property type="match status" value="1"/>
</dbReference>
<dbReference type="FunFam" id="1.10.472.80:FF:000006">
    <property type="entry name" value="TBC1 domain family member 14"/>
    <property type="match status" value="1"/>
</dbReference>
<dbReference type="Gene3D" id="1.10.8.270">
    <property type="entry name" value="putative rabgap domain of human tbc1 domain family member 14 like domains"/>
    <property type="match status" value="1"/>
</dbReference>
<dbReference type="Gene3D" id="1.10.10.750">
    <property type="entry name" value="Ypt/Rab-GAP domain of gyp1p, domain 1"/>
    <property type="match status" value="1"/>
</dbReference>
<dbReference type="Gene3D" id="1.10.472.80">
    <property type="entry name" value="Ypt/Rab-GAP domain of gyp1p, domain 3"/>
    <property type="match status" value="1"/>
</dbReference>
<dbReference type="InterPro" id="IPR000195">
    <property type="entry name" value="Rab-GAP-TBC_dom"/>
</dbReference>
<dbReference type="InterPro" id="IPR035969">
    <property type="entry name" value="Rab-GAP_TBC_sf"/>
</dbReference>
<dbReference type="InterPro" id="IPR050302">
    <property type="entry name" value="Rab_GAP_TBC_domain"/>
</dbReference>
<dbReference type="PANTHER" id="PTHR47219">
    <property type="entry name" value="RAB GTPASE-ACTIVATING PROTEIN 1-LIKE"/>
    <property type="match status" value="1"/>
</dbReference>
<dbReference type="PANTHER" id="PTHR47219:SF21">
    <property type="entry name" value="TBC1 DOMAIN FAMILY MEMBER 14"/>
    <property type="match status" value="1"/>
</dbReference>
<dbReference type="Pfam" id="PF00566">
    <property type="entry name" value="RabGAP-TBC"/>
    <property type="match status" value="1"/>
</dbReference>
<dbReference type="SMART" id="SM00164">
    <property type="entry name" value="TBC"/>
    <property type="match status" value="1"/>
</dbReference>
<dbReference type="SUPFAM" id="SSF47923">
    <property type="entry name" value="Ypt/Rab-GAP domain of gyp1p"/>
    <property type="match status" value="2"/>
</dbReference>
<dbReference type="PROSITE" id="PS50086">
    <property type="entry name" value="TBC_RABGAP"/>
    <property type="match status" value="1"/>
</dbReference>
<feature type="chain" id="PRO_0000319417" description="TBC1 domain family member 14">
    <location>
        <begin position="1"/>
        <end position="692"/>
    </location>
</feature>
<feature type="domain" description="Rab-GAP TBC" evidence="2">
    <location>
        <begin position="400"/>
        <end position="610"/>
    </location>
</feature>
<feature type="region of interest" description="Disordered" evidence="3">
    <location>
        <begin position="270"/>
        <end position="303"/>
    </location>
</feature>
<feature type="region of interest" description="Disordered" evidence="3">
    <location>
        <begin position="315"/>
        <end position="335"/>
    </location>
</feature>
<feature type="compositionally biased region" description="Basic and acidic residues" evidence="3">
    <location>
        <begin position="271"/>
        <end position="287"/>
    </location>
</feature>
<feature type="compositionally biased region" description="Basic and acidic residues" evidence="3">
    <location>
        <begin position="326"/>
        <end position="335"/>
    </location>
</feature>
<feature type="modified residue" description="Phosphoserine" evidence="1">
    <location>
        <position position="91"/>
    </location>
</feature>
<feature type="modified residue" description="Phosphoserine" evidence="1">
    <location>
        <position position="294"/>
    </location>
</feature>
<protein>
    <recommendedName>
        <fullName>TBC1 domain family member 14</fullName>
    </recommendedName>
</protein>
<evidence type="ECO:0000250" key="1">
    <source>
        <dbReference type="UniProtKB" id="Q9P2M4"/>
    </source>
</evidence>
<evidence type="ECO:0000255" key="2">
    <source>
        <dbReference type="PROSITE-ProRule" id="PRU00163"/>
    </source>
</evidence>
<evidence type="ECO:0000256" key="3">
    <source>
        <dbReference type="SAM" id="MobiDB-lite"/>
    </source>
</evidence>
<evidence type="ECO:0000305" key="4"/>
<organism>
    <name type="scientific">Bos taurus</name>
    <name type="common">Bovine</name>
    <dbReference type="NCBI Taxonomy" id="9913"/>
    <lineage>
        <taxon>Eukaryota</taxon>
        <taxon>Metazoa</taxon>
        <taxon>Chordata</taxon>
        <taxon>Craniata</taxon>
        <taxon>Vertebrata</taxon>
        <taxon>Euteleostomi</taxon>
        <taxon>Mammalia</taxon>
        <taxon>Eutheria</taxon>
        <taxon>Laurasiatheria</taxon>
        <taxon>Artiodactyla</taxon>
        <taxon>Ruminantia</taxon>
        <taxon>Pecora</taxon>
        <taxon>Bovidae</taxon>
        <taxon>Bovinae</taxon>
        <taxon>Bos</taxon>
    </lineage>
</organism>
<comment type="function">
    <text evidence="1">Plays a role in the regulation of starvation-induced autophagosome formation. Together with the TRAPPIII complex, regulates a constitutive trafficking step from peripheral recycling endosomes to the early Golgi, maintaining the cycling pool of ATG9 required for initiation of autophagy.</text>
</comment>
<comment type="subunit">
    <text evidence="1">Interacts with ULK1. May interact with RAB11A and RAB11B, but does not exhibit any GTPase-activating activity toward these proteins. Interacts with TRAPPC8.</text>
</comment>
<comment type="subcellular location">
    <subcellularLocation>
        <location evidence="1">Golgi apparatus</location>
        <location evidence="1">cis-Golgi network</location>
    </subcellularLocation>
    <subcellularLocation>
        <location evidence="1">Golgi apparatus</location>
        <location evidence="1">trans-Golgi network</location>
    </subcellularLocation>
    <text evidence="1">After amino acid starvation, Golgi apparatus-associated protein levels increase compared with fed conditions. May be cycling between the Golgi apparatus and an endosomal pool, redistributing to the Golgi apparatus upon starvation.</text>
</comment>
<comment type="sequence caution" evidence="4">
    <conflict type="erroneous initiation">
        <sequence resource="EMBL-CDS" id="AAI46263"/>
    </conflict>
</comment>
<keyword id="KW-0333">Golgi apparatus</keyword>
<keyword id="KW-0343">GTPase activation</keyword>
<keyword id="KW-0597">Phosphoprotein</keyword>
<keyword id="KW-1185">Reference proteome</keyword>
<gene>
    <name type="primary">TBC1D14</name>
</gene>
<proteinExistence type="evidence at transcript level"/>